<organism>
    <name type="scientific">Neisseria meningitidis serogroup C / serotype 2a (strain ATCC 700532 / DSM 15464 / FAM18)</name>
    <dbReference type="NCBI Taxonomy" id="272831"/>
    <lineage>
        <taxon>Bacteria</taxon>
        <taxon>Pseudomonadati</taxon>
        <taxon>Pseudomonadota</taxon>
        <taxon>Betaproteobacteria</taxon>
        <taxon>Neisseriales</taxon>
        <taxon>Neisseriaceae</taxon>
        <taxon>Neisseria</taxon>
    </lineage>
</organism>
<dbReference type="EMBL" id="AM421808">
    <property type="protein sequence ID" value="CAM09927.1"/>
    <property type="molecule type" value="Genomic_DNA"/>
</dbReference>
<dbReference type="RefSeq" id="WP_002221275.1">
    <property type="nucleotide sequence ID" value="NC_008767.1"/>
</dbReference>
<dbReference type="SMR" id="A1KSU6"/>
<dbReference type="KEGG" id="nmc:NMC0634"/>
<dbReference type="HOGENOM" id="CLU_087843_4_1_4"/>
<dbReference type="Proteomes" id="UP000002286">
    <property type="component" value="Chromosome"/>
</dbReference>
<dbReference type="GO" id="GO:0005829">
    <property type="term" value="C:cytosol"/>
    <property type="evidence" value="ECO:0007669"/>
    <property type="project" value="TreeGrafter"/>
</dbReference>
<dbReference type="GO" id="GO:0003723">
    <property type="term" value="F:RNA binding"/>
    <property type="evidence" value="ECO:0007669"/>
    <property type="project" value="UniProtKB-UniRule"/>
</dbReference>
<dbReference type="GO" id="GO:0006353">
    <property type="term" value="P:DNA-templated transcription termination"/>
    <property type="evidence" value="ECO:0007669"/>
    <property type="project" value="UniProtKB-UniRule"/>
</dbReference>
<dbReference type="GO" id="GO:0031564">
    <property type="term" value="P:transcription antitermination"/>
    <property type="evidence" value="ECO:0007669"/>
    <property type="project" value="UniProtKB-KW"/>
</dbReference>
<dbReference type="FunFam" id="1.10.940.10:FF:000010">
    <property type="entry name" value="Transcription antitermination protein NusB"/>
    <property type="match status" value="1"/>
</dbReference>
<dbReference type="Gene3D" id="1.10.940.10">
    <property type="entry name" value="NusB-like"/>
    <property type="match status" value="1"/>
</dbReference>
<dbReference type="HAMAP" id="MF_00073">
    <property type="entry name" value="NusB"/>
    <property type="match status" value="1"/>
</dbReference>
<dbReference type="InterPro" id="IPR035926">
    <property type="entry name" value="NusB-like_sf"/>
</dbReference>
<dbReference type="InterPro" id="IPR011605">
    <property type="entry name" value="NusB_fam"/>
</dbReference>
<dbReference type="InterPro" id="IPR006027">
    <property type="entry name" value="NusB_RsmB_TIM44"/>
</dbReference>
<dbReference type="NCBIfam" id="TIGR01951">
    <property type="entry name" value="nusB"/>
    <property type="match status" value="1"/>
</dbReference>
<dbReference type="PANTHER" id="PTHR11078:SF3">
    <property type="entry name" value="ANTITERMINATION NUSB DOMAIN-CONTAINING PROTEIN"/>
    <property type="match status" value="1"/>
</dbReference>
<dbReference type="PANTHER" id="PTHR11078">
    <property type="entry name" value="N UTILIZATION SUBSTANCE PROTEIN B-RELATED"/>
    <property type="match status" value="1"/>
</dbReference>
<dbReference type="Pfam" id="PF01029">
    <property type="entry name" value="NusB"/>
    <property type="match status" value="1"/>
</dbReference>
<dbReference type="SUPFAM" id="SSF48013">
    <property type="entry name" value="NusB-like"/>
    <property type="match status" value="1"/>
</dbReference>
<proteinExistence type="inferred from homology"/>
<keyword id="KW-0694">RNA-binding</keyword>
<keyword id="KW-0804">Transcription</keyword>
<keyword id="KW-0889">Transcription antitermination</keyword>
<keyword id="KW-0805">Transcription regulation</keyword>
<protein>
    <recommendedName>
        <fullName evidence="1">Transcription antitermination protein NusB</fullName>
    </recommendedName>
    <alternativeName>
        <fullName evidence="1">Antitermination factor NusB</fullName>
    </alternativeName>
</protein>
<reference key="1">
    <citation type="journal article" date="2007" name="PLoS Genet.">
        <title>Meningococcal genetic variation mechanisms viewed through comparative analysis of serogroup C strain FAM18.</title>
        <authorList>
            <person name="Bentley S.D."/>
            <person name="Vernikos G.S."/>
            <person name="Snyder L.A.S."/>
            <person name="Churcher C."/>
            <person name="Arrowsmith C."/>
            <person name="Chillingworth T."/>
            <person name="Cronin A."/>
            <person name="Davis P.H."/>
            <person name="Holroyd N.E."/>
            <person name="Jagels K."/>
            <person name="Maddison M."/>
            <person name="Moule S."/>
            <person name="Rabbinowitsch E."/>
            <person name="Sharp S."/>
            <person name="Unwin L."/>
            <person name="Whitehead S."/>
            <person name="Quail M.A."/>
            <person name="Achtman M."/>
            <person name="Barrell B.G."/>
            <person name="Saunders N.J."/>
            <person name="Parkhill J."/>
        </authorList>
    </citation>
    <scope>NUCLEOTIDE SEQUENCE [LARGE SCALE GENOMIC DNA]</scope>
    <source>
        <strain>ATCC 700532 / DSM 15464 / FAM18</strain>
    </source>
</reference>
<name>NUSB_NEIMF</name>
<evidence type="ECO:0000255" key="1">
    <source>
        <dbReference type="HAMAP-Rule" id="MF_00073"/>
    </source>
</evidence>
<feature type="chain" id="PRO_1000023754" description="Transcription antitermination protein NusB">
    <location>
        <begin position="1"/>
        <end position="141"/>
    </location>
</feature>
<comment type="function">
    <text evidence="1">Involved in transcription antitermination. Required for transcription of ribosomal RNA (rRNA) genes. Binds specifically to the boxA antiterminator sequence of the ribosomal RNA (rrn) operons.</text>
</comment>
<comment type="similarity">
    <text evidence="1">Belongs to the NusB family.</text>
</comment>
<sequence>MKTARRRSRELAVQAVYQSLINRTAAPEIAKNIREMPDFAKADEELFNKLFFGTQTNAADYIQKIRPLLDRDEKDLNPIERAVLLTACHELSAMPETPYPVIINEAIEVTKTFGGTDGHKFVNGILDKLAAQIRPDEPKRR</sequence>
<accession>A1KSU6</accession>
<gene>
    <name evidence="1" type="primary">nusB</name>
    <name type="ordered locus">NMC0634</name>
</gene>